<protein>
    <recommendedName>
        <fullName>Acylphosphatase</fullName>
        <ecNumber>3.6.1.7</ecNumber>
    </recommendedName>
    <alternativeName>
        <fullName>Acylphosphate phosphohydrolase</fullName>
    </alternativeName>
</protein>
<organism>
    <name type="scientific">Thermobifida fusca (strain YX)</name>
    <dbReference type="NCBI Taxonomy" id="269800"/>
    <lineage>
        <taxon>Bacteria</taxon>
        <taxon>Bacillati</taxon>
        <taxon>Actinomycetota</taxon>
        <taxon>Actinomycetes</taxon>
        <taxon>Streptosporangiales</taxon>
        <taxon>Nocardiopsidaceae</taxon>
        <taxon>Thermobifida</taxon>
    </lineage>
</organism>
<name>ACYP_THEFY</name>
<dbReference type="EC" id="3.6.1.7"/>
<dbReference type="EMBL" id="CP000088">
    <property type="protein sequence ID" value="AAZ54691.1"/>
    <property type="molecule type" value="Genomic_DNA"/>
</dbReference>
<dbReference type="SMR" id="Q47S76"/>
<dbReference type="STRING" id="269800.Tfu_0653"/>
<dbReference type="KEGG" id="tfu:Tfu_0653"/>
<dbReference type="eggNOG" id="COG1254">
    <property type="taxonomic scope" value="Bacteria"/>
</dbReference>
<dbReference type="HOGENOM" id="CLU_141932_3_0_11"/>
<dbReference type="OrthoDB" id="3182027at2"/>
<dbReference type="GO" id="GO:0003998">
    <property type="term" value="F:acylphosphatase activity"/>
    <property type="evidence" value="ECO:0007669"/>
    <property type="project" value="UniProtKB-EC"/>
</dbReference>
<dbReference type="Gene3D" id="3.30.70.100">
    <property type="match status" value="1"/>
</dbReference>
<dbReference type="InterPro" id="IPR020456">
    <property type="entry name" value="Acylphosphatase"/>
</dbReference>
<dbReference type="InterPro" id="IPR001792">
    <property type="entry name" value="Acylphosphatase-like_dom"/>
</dbReference>
<dbReference type="InterPro" id="IPR036046">
    <property type="entry name" value="Acylphosphatase-like_dom_sf"/>
</dbReference>
<dbReference type="InterPro" id="IPR017968">
    <property type="entry name" value="Acylphosphatase_CS"/>
</dbReference>
<dbReference type="NCBIfam" id="NF010997">
    <property type="entry name" value="PRK14422.1"/>
    <property type="match status" value="1"/>
</dbReference>
<dbReference type="NCBIfam" id="NF011000">
    <property type="entry name" value="PRK14426.1"/>
    <property type="match status" value="1"/>
</dbReference>
<dbReference type="PANTHER" id="PTHR47268">
    <property type="entry name" value="ACYLPHOSPHATASE"/>
    <property type="match status" value="1"/>
</dbReference>
<dbReference type="PANTHER" id="PTHR47268:SF4">
    <property type="entry name" value="ACYLPHOSPHATASE"/>
    <property type="match status" value="1"/>
</dbReference>
<dbReference type="Pfam" id="PF00708">
    <property type="entry name" value="Acylphosphatase"/>
    <property type="match status" value="1"/>
</dbReference>
<dbReference type="SUPFAM" id="SSF54975">
    <property type="entry name" value="Acylphosphatase/BLUF domain-like"/>
    <property type="match status" value="1"/>
</dbReference>
<dbReference type="PROSITE" id="PS00150">
    <property type="entry name" value="ACYLPHOSPHATASE_1"/>
    <property type="match status" value="1"/>
</dbReference>
<dbReference type="PROSITE" id="PS51160">
    <property type="entry name" value="ACYLPHOSPHATASE_3"/>
    <property type="match status" value="1"/>
</dbReference>
<sequence length="91" mass="10281">MEKVRLTAWVRGHVQGVGFRWWTRARALELGLTGAATNLDDGRVEVVAEGDRTACERLLELLRSGQTPGRVDSVVERWTNHRGSFTGFEER</sequence>
<keyword id="KW-0378">Hydrolase</keyword>
<feature type="chain" id="PRO_0000326831" description="Acylphosphatase">
    <location>
        <begin position="1"/>
        <end position="91"/>
    </location>
</feature>
<feature type="domain" description="Acylphosphatase-like" evidence="1">
    <location>
        <begin position="5"/>
        <end position="91"/>
    </location>
</feature>
<feature type="active site" evidence="1">
    <location>
        <position position="20"/>
    </location>
</feature>
<feature type="active site" evidence="1">
    <location>
        <position position="38"/>
    </location>
</feature>
<evidence type="ECO:0000255" key="1">
    <source>
        <dbReference type="PROSITE-ProRule" id="PRU00520"/>
    </source>
</evidence>
<evidence type="ECO:0000305" key="2"/>
<comment type="catalytic activity">
    <reaction>
        <text>an acyl phosphate + H2O = a carboxylate + phosphate + H(+)</text>
        <dbReference type="Rhea" id="RHEA:14965"/>
        <dbReference type="ChEBI" id="CHEBI:15377"/>
        <dbReference type="ChEBI" id="CHEBI:15378"/>
        <dbReference type="ChEBI" id="CHEBI:29067"/>
        <dbReference type="ChEBI" id="CHEBI:43474"/>
        <dbReference type="ChEBI" id="CHEBI:59918"/>
        <dbReference type="EC" id="3.6.1.7"/>
    </reaction>
</comment>
<comment type="similarity">
    <text evidence="2">Belongs to the acylphosphatase family.</text>
</comment>
<reference key="1">
    <citation type="journal article" date="2007" name="J. Bacteriol.">
        <title>Genome sequence and analysis of the soil cellulolytic actinomycete Thermobifida fusca YX.</title>
        <authorList>
            <person name="Lykidis A."/>
            <person name="Mavromatis K."/>
            <person name="Ivanova N."/>
            <person name="Anderson I."/>
            <person name="Land M."/>
            <person name="DiBartolo G."/>
            <person name="Martinez M."/>
            <person name="Lapidus A."/>
            <person name="Lucas S."/>
            <person name="Copeland A."/>
            <person name="Richardson P."/>
            <person name="Wilson D.B."/>
            <person name="Kyrpides N."/>
        </authorList>
    </citation>
    <scope>NUCLEOTIDE SEQUENCE [LARGE SCALE GENOMIC DNA]</scope>
    <source>
        <strain>YX</strain>
    </source>
</reference>
<accession>Q47S76</accession>
<gene>
    <name type="primary">acyP</name>
    <name type="ordered locus">Tfu_0653</name>
</gene>
<proteinExistence type="inferred from homology"/>